<evidence type="ECO:0000250" key="1">
    <source>
        <dbReference type="UniProtKB" id="P54860"/>
    </source>
</evidence>
<evidence type="ECO:0000256" key="2">
    <source>
        <dbReference type="SAM" id="MobiDB-lite"/>
    </source>
</evidence>
<evidence type="ECO:0000269" key="3">
    <source>
    </source>
</evidence>
<evidence type="ECO:0000305" key="4"/>
<organism>
    <name type="scientific">Schizosaccharomyces pombe (strain 972 / ATCC 24843)</name>
    <name type="common">Fission yeast</name>
    <dbReference type="NCBI Taxonomy" id="284812"/>
    <lineage>
        <taxon>Eukaryota</taxon>
        <taxon>Fungi</taxon>
        <taxon>Dikarya</taxon>
        <taxon>Ascomycota</taxon>
        <taxon>Taphrinomycotina</taxon>
        <taxon>Schizosaccharomycetes</taxon>
        <taxon>Schizosaccharomycetales</taxon>
        <taxon>Schizosaccharomycetaceae</taxon>
        <taxon>Schizosaccharomyces</taxon>
    </lineage>
</organism>
<protein>
    <recommendedName>
        <fullName>Ubiquitin conjugation factor E4</fullName>
        <ecNumber evidence="1">2.3.2.-</ecNumber>
    </recommendedName>
    <alternativeName>
        <fullName>Ubiquitin fusion degradation protein 2</fullName>
        <shortName>UB fusion protein 2</shortName>
    </alternativeName>
</protein>
<feature type="chain" id="PRO_0000194996" description="Ubiquitin conjugation factor E4">
    <location>
        <begin position="1"/>
        <end position="1010"/>
    </location>
</feature>
<feature type="domain" description="U-box">
    <location>
        <begin position="930"/>
        <end position="1004"/>
    </location>
</feature>
<feature type="region of interest" description="Disordered" evidence="2">
    <location>
        <begin position="13"/>
        <end position="70"/>
    </location>
</feature>
<feature type="compositionally biased region" description="Basic and acidic residues" evidence="2">
    <location>
        <begin position="24"/>
        <end position="44"/>
    </location>
</feature>
<feature type="sequence conflict" description="In Ref. 1; AAC80427." evidence="4" ref="1">
    <original>WMHFITC</original>
    <variation>MDAFYNS</variation>
    <location>
        <begin position="80"/>
        <end position="86"/>
    </location>
</feature>
<feature type="sequence conflict" description="In Ref. 1; AAC80427." evidence="4" ref="1">
    <original>N</original>
    <variation>D</variation>
    <location>
        <position position="137"/>
    </location>
</feature>
<feature type="sequence conflict" description="In Ref. 1; AAC80427." evidence="4" ref="1">
    <original>ST</original>
    <variation>LS</variation>
    <location>
        <begin position="331"/>
        <end position="332"/>
    </location>
</feature>
<feature type="sequence conflict" description="In Ref. 1; AAC80427." evidence="4" ref="1">
    <original>E</original>
    <variation>Y</variation>
    <location>
        <position position="474"/>
    </location>
</feature>
<feature type="sequence conflict" description="In Ref. 1; AAC80427." evidence="4" ref="1">
    <original>ML</original>
    <variation>YC</variation>
    <location>
        <begin position="530"/>
        <end position="531"/>
    </location>
</feature>
<feature type="sequence conflict" description="In Ref. 1; AAC80427." evidence="4" ref="1">
    <original>V</original>
    <variation>W</variation>
    <location>
        <position position="644"/>
    </location>
</feature>
<feature type="sequence conflict" description="In Ref. 1; AAC80427." evidence="4" ref="1">
    <original>A</original>
    <variation>T</variation>
    <location>
        <position position="671"/>
    </location>
</feature>
<feature type="sequence conflict" description="In Ref. 1; AAC80427." evidence="4" ref="1">
    <original>G</original>
    <variation>A</variation>
    <location>
        <position position="683"/>
    </location>
</feature>
<feature type="sequence conflict" description="In Ref. 1; AAC80427." evidence="4" ref="1">
    <original>Q</original>
    <variation>P</variation>
    <location>
        <position position="687"/>
    </location>
</feature>
<feature type="sequence conflict" description="In Ref. 1; AAC80427." evidence="4" ref="1">
    <original>E</original>
    <variation>A</variation>
    <location>
        <position position="700"/>
    </location>
</feature>
<feature type="sequence conflict" description="In Ref. 1; AAC80427." evidence="4" ref="1">
    <original>K</original>
    <variation>T</variation>
    <location>
        <position position="707"/>
    </location>
</feature>
<feature type="sequence conflict" description="In Ref. 1; AAC80427." evidence="4" ref="1">
    <original>AFC</original>
    <variation>PFV</variation>
    <location>
        <begin position="809"/>
        <end position="811"/>
    </location>
</feature>
<feature type="sequence conflict" description="In Ref. 1; AAC80427." evidence="4" ref="1">
    <original>TS</original>
    <variation>PG</variation>
    <location>
        <begin position="890"/>
        <end position="891"/>
    </location>
</feature>
<feature type="sequence conflict" description="In Ref. 1; AAC80427." evidence="4" ref="1">
    <original>N</original>
    <variation>P</variation>
    <location>
        <position position="897"/>
    </location>
</feature>
<feature type="sequence conflict" description="In Ref. 1; AAC80427." evidence="4" ref="1">
    <original>IKE</original>
    <variation>LKA</variation>
    <location>
        <begin position="907"/>
        <end position="909"/>
    </location>
</feature>
<feature type="sequence conflict" description="In Ref. 1; AAC80427." evidence="4" ref="1">
    <original>NRV</original>
    <variation>HRA</variation>
    <location>
        <begin position="912"/>
        <end position="914"/>
    </location>
</feature>
<feature type="sequence conflict" description="In Ref. 1; AAC80427." evidence="4" ref="1">
    <original>E</original>
    <variation>Q</variation>
    <location>
        <position position="921"/>
    </location>
</feature>
<feature type="sequence conflict" description="In Ref. 4; BAA84654." evidence="4" ref="4">
    <original>E</original>
    <variation>D</variation>
    <location>
        <position position="992"/>
    </location>
</feature>
<comment type="function">
    <text evidence="1">E4 ubiquitin chain-elongation enzyme specifically involved in polyubiquitin chain assembly. Binds to cdc48 and elongates mono- and diubiquitinated ERAD substrates presented by the ufd1-npl4-cdc48 (UNC) AAA ATPase complex to a chain length of 4 to 6 ubiquitin moieties. Delivers these polyubiquitinated substrates to downstream ERAD components, which target them to the proteasome. Enhances ubiquitination at 'Lys-48', but not at 'Lys-29' of the Ub moiety.</text>
</comment>
<comment type="pathway">
    <text evidence="1">Protein modification; protein ubiquitination.</text>
</comment>
<comment type="subcellular location">
    <subcellularLocation>
        <location evidence="3">Cytoplasm</location>
    </subcellularLocation>
    <subcellularLocation>
        <location evidence="3">Nucleus</location>
    </subcellularLocation>
</comment>
<comment type="domain">
    <text evidence="1">The U-box domain is required for the ubiquitin protein ligase activity.</text>
</comment>
<comment type="similarity">
    <text evidence="4">Belongs to the ubiquitin conjugation factor E4 family.</text>
</comment>
<comment type="sequence caution" evidence="4">
    <conflict type="erroneous initiation">
        <sequence resource="EMBL-CDS" id="AAC80427"/>
    </conflict>
</comment>
<gene>
    <name type="primary">ufd2</name>
    <name type="ORF">SPAC145.04</name>
    <name type="ORF">SPAC20H4.10</name>
</gene>
<dbReference type="EC" id="2.3.2.-" evidence="1"/>
<dbReference type="EMBL" id="AF059906">
    <property type="protein sequence ID" value="AAC80427.1"/>
    <property type="status" value="ALT_INIT"/>
    <property type="molecule type" value="mRNA"/>
</dbReference>
<dbReference type="EMBL" id="CU329670">
    <property type="protein sequence ID" value="CAC19740.1"/>
    <property type="molecule type" value="Genomic_DNA"/>
</dbReference>
<dbReference type="EMBL" id="AB027791">
    <property type="protein sequence ID" value="BAA87095.1"/>
    <property type="molecule type" value="Genomic_DNA"/>
</dbReference>
<dbReference type="EMBL" id="AB032715">
    <property type="protein sequence ID" value="BAA84654.1"/>
    <property type="molecule type" value="mRNA"/>
</dbReference>
<dbReference type="PIR" id="T43725">
    <property type="entry name" value="T43725"/>
</dbReference>
<dbReference type="RefSeq" id="NP_593630.1">
    <property type="nucleotide sequence ID" value="NM_001019061.2"/>
</dbReference>
<dbReference type="SMR" id="Q9HE05"/>
<dbReference type="BioGRID" id="278506">
    <property type="interactions" value="136"/>
</dbReference>
<dbReference type="FunCoup" id="Q9HE05">
    <property type="interactions" value="1164"/>
</dbReference>
<dbReference type="IntAct" id="Q9HE05">
    <property type="interactions" value="3"/>
</dbReference>
<dbReference type="MINT" id="Q9HE05"/>
<dbReference type="STRING" id="284812.Q9HE05"/>
<dbReference type="iPTMnet" id="Q9HE05"/>
<dbReference type="PaxDb" id="4896-SPAC20H4.10.1"/>
<dbReference type="EnsemblFungi" id="SPAC20H4.10.1">
    <property type="protein sequence ID" value="SPAC20H4.10.1:pep"/>
    <property type="gene ID" value="SPAC20H4.10"/>
</dbReference>
<dbReference type="GeneID" id="2542023"/>
<dbReference type="KEGG" id="spo:2542023"/>
<dbReference type="PomBase" id="SPAC20H4.10">
    <property type="gene designation" value="ufd2"/>
</dbReference>
<dbReference type="VEuPathDB" id="FungiDB:SPAC20H4.10"/>
<dbReference type="eggNOG" id="KOG2042">
    <property type="taxonomic scope" value="Eukaryota"/>
</dbReference>
<dbReference type="HOGENOM" id="CLU_003224_2_1_1"/>
<dbReference type="InParanoid" id="Q9HE05"/>
<dbReference type="OMA" id="SNAFMTN"/>
<dbReference type="PhylomeDB" id="Q9HE05"/>
<dbReference type="Reactome" id="R-SPO-983168">
    <property type="pathway name" value="Antigen processing: Ubiquitination &amp; Proteasome degradation"/>
</dbReference>
<dbReference type="UniPathway" id="UPA00143"/>
<dbReference type="PRO" id="PR:Q9HE05"/>
<dbReference type="Proteomes" id="UP000002485">
    <property type="component" value="Chromosome I"/>
</dbReference>
<dbReference type="GO" id="GO:0005737">
    <property type="term" value="C:cytoplasm"/>
    <property type="evidence" value="ECO:0007005"/>
    <property type="project" value="PomBase"/>
</dbReference>
<dbReference type="GO" id="GO:0005634">
    <property type="term" value="C:nucleus"/>
    <property type="evidence" value="ECO:0007005"/>
    <property type="project" value="PomBase"/>
</dbReference>
<dbReference type="GO" id="GO:0000151">
    <property type="term" value="C:ubiquitin ligase complex"/>
    <property type="evidence" value="ECO:0007669"/>
    <property type="project" value="InterPro"/>
</dbReference>
<dbReference type="GO" id="GO:0034450">
    <property type="term" value="F:ubiquitin-ubiquitin ligase activity"/>
    <property type="evidence" value="ECO:0000318"/>
    <property type="project" value="GO_Central"/>
</dbReference>
<dbReference type="GO" id="GO:0036503">
    <property type="term" value="P:ERAD pathway"/>
    <property type="evidence" value="ECO:0000318"/>
    <property type="project" value="GO_Central"/>
</dbReference>
<dbReference type="GO" id="GO:0000209">
    <property type="term" value="P:protein polyubiquitination"/>
    <property type="evidence" value="ECO:0000318"/>
    <property type="project" value="GO_Central"/>
</dbReference>
<dbReference type="GO" id="GO:0006511">
    <property type="term" value="P:ubiquitin-dependent protein catabolic process"/>
    <property type="evidence" value="ECO:0007669"/>
    <property type="project" value="InterPro"/>
</dbReference>
<dbReference type="CDD" id="cd16657">
    <property type="entry name" value="RING-Ubox_UBE4A"/>
    <property type="match status" value="1"/>
</dbReference>
<dbReference type="FunFam" id="3.30.40.10:FF:000518">
    <property type="entry name" value="Ubiquitin conjugation factor E4 A"/>
    <property type="match status" value="1"/>
</dbReference>
<dbReference type="Gene3D" id="3.30.40.10">
    <property type="entry name" value="Zinc/RING finger domain, C3HC4 (zinc finger)"/>
    <property type="match status" value="1"/>
</dbReference>
<dbReference type="InterPro" id="IPR019474">
    <property type="entry name" value="Ub_conjug_fac_E4_core"/>
</dbReference>
<dbReference type="InterPro" id="IPR045132">
    <property type="entry name" value="UBE4"/>
</dbReference>
<dbReference type="InterPro" id="IPR003613">
    <property type="entry name" value="Ubox_domain"/>
</dbReference>
<dbReference type="InterPro" id="IPR013083">
    <property type="entry name" value="Znf_RING/FYVE/PHD"/>
</dbReference>
<dbReference type="PANTHER" id="PTHR13931:SF2">
    <property type="entry name" value="UBIQUITIN CONJUGATION FACTOR E4 B"/>
    <property type="match status" value="1"/>
</dbReference>
<dbReference type="PANTHER" id="PTHR13931">
    <property type="entry name" value="UBIQUITINATION FACTOR E4"/>
    <property type="match status" value="1"/>
</dbReference>
<dbReference type="Pfam" id="PF04564">
    <property type="entry name" value="U-box"/>
    <property type="match status" value="1"/>
</dbReference>
<dbReference type="Pfam" id="PF10408">
    <property type="entry name" value="Ufd2P_core"/>
    <property type="match status" value="1"/>
</dbReference>
<dbReference type="SMART" id="SM00504">
    <property type="entry name" value="Ubox"/>
    <property type="match status" value="1"/>
</dbReference>
<dbReference type="SUPFAM" id="SSF57850">
    <property type="entry name" value="RING/U-box"/>
    <property type="match status" value="1"/>
</dbReference>
<dbReference type="PROSITE" id="PS51698">
    <property type="entry name" value="U_BOX"/>
    <property type="match status" value="1"/>
</dbReference>
<proteinExistence type="evidence at transcript level"/>
<reference key="1">
    <citation type="submission" date="1998-11" db="EMBL/GenBank/DDBJ databases">
        <title>The characterization of ubiquitin fusion degradation protein-2 (UFD2) homolog in Schizosaccahromyces pombe.</title>
        <authorList>
            <person name="Jang Y.-J."/>
            <person name="Yoo H.-S."/>
        </authorList>
    </citation>
    <scope>NUCLEOTIDE SEQUENCE [MRNA]</scope>
    <source>
        <strain>972 / ATCC 24843</strain>
    </source>
</reference>
<reference key="2">
    <citation type="journal article" date="2002" name="Nature">
        <title>The genome sequence of Schizosaccharomyces pombe.</title>
        <authorList>
            <person name="Wood V."/>
            <person name="Gwilliam R."/>
            <person name="Rajandream M.A."/>
            <person name="Lyne M.H."/>
            <person name="Lyne R."/>
            <person name="Stewart A."/>
            <person name="Sgouros J.G."/>
            <person name="Peat N."/>
            <person name="Hayles J."/>
            <person name="Baker S.G."/>
            <person name="Basham D."/>
            <person name="Bowman S."/>
            <person name="Brooks K."/>
            <person name="Brown D."/>
            <person name="Brown S."/>
            <person name="Chillingworth T."/>
            <person name="Churcher C.M."/>
            <person name="Collins M."/>
            <person name="Connor R."/>
            <person name="Cronin A."/>
            <person name="Davis P."/>
            <person name="Feltwell T."/>
            <person name="Fraser A."/>
            <person name="Gentles S."/>
            <person name="Goble A."/>
            <person name="Hamlin N."/>
            <person name="Harris D.E."/>
            <person name="Hidalgo J."/>
            <person name="Hodgson G."/>
            <person name="Holroyd S."/>
            <person name="Hornsby T."/>
            <person name="Howarth S."/>
            <person name="Huckle E.J."/>
            <person name="Hunt S."/>
            <person name="Jagels K."/>
            <person name="James K.D."/>
            <person name="Jones L."/>
            <person name="Jones M."/>
            <person name="Leather S."/>
            <person name="McDonald S."/>
            <person name="McLean J."/>
            <person name="Mooney P."/>
            <person name="Moule S."/>
            <person name="Mungall K.L."/>
            <person name="Murphy L.D."/>
            <person name="Niblett D."/>
            <person name="Odell C."/>
            <person name="Oliver K."/>
            <person name="O'Neil S."/>
            <person name="Pearson D."/>
            <person name="Quail M.A."/>
            <person name="Rabbinowitsch E."/>
            <person name="Rutherford K.M."/>
            <person name="Rutter S."/>
            <person name="Saunders D."/>
            <person name="Seeger K."/>
            <person name="Sharp S."/>
            <person name="Skelton J."/>
            <person name="Simmonds M.N."/>
            <person name="Squares R."/>
            <person name="Squares S."/>
            <person name="Stevens K."/>
            <person name="Taylor K."/>
            <person name="Taylor R.G."/>
            <person name="Tivey A."/>
            <person name="Walsh S.V."/>
            <person name="Warren T."/>
            <person name="Whitehead S."/>
            <person name="Woodward J.R."/>
            <person name="Volckaert G."/>
            <person name="Aert R."/>
            <person name="Robben J."/>
            <person name="Grymonprez B."/>
            <person name="Weltjens I."/>
            <person name="Vanstreels E."/>
            <person name="Rieger M."/>
            <person name="Schaefer M."/>
            <person name="Mueller-Auer S."/>
            <person name="Gabel C."/>
            <person name="Fuchs M."/>
            <person name="Duesterhoeft A."/>
            <person name="Fritzc C."/>
            <person name="Holzer E."/>
            <person name="Moestl D."/>
            <person name="Hilbert H."/>
            <person name="Borzym K."/>
            <person name="Langer I."/>
            <person name="Beck A."/>
            <person name="Lehrach H."/>
            <person name="Reinhardt R."/>
            <person name="Pohl T.M."/>
            <person name="Eger P."/>
            <person name="Zimmermann W."/>
            <person name="Wedler H."/>
            <person name="Wambutt R."/>
            <person name="Purnelle B."/>
            <person name="Goffeau A."/>
            <person name="Cadieu E."/>
            <person name="Dreano S."/>
            <person name="Gloux S."/>
            <person name="Lelaure V."/>
            <person name="Mottier S."/>
            <person name="Galibert F."/>
            <person name="Aves S.J."/>
            <person name="Xiang Z."/>
            <person name="Hunt C."/>
            <person name="Moore K."/>
            <person name="Hurst S.M."/>
            <person name="Lucas M."/>
            <person name="Rochet M."/>
            <person name="Gaillardin C."/>
            <person name="Tallada V.A."/>
            <person name="Garzon A."/>
            <person name="Thode G."/>
            <person name="Daga R.R."/>
            <person name="Cruzado L."/>
            <person name="Jimenez J."/>
            <person name="Sanchez M."/>
            <person name="del Rey F."/>
            <person name="Benito J."/>
            <person name="Dominguez A."/>
            <person name="Revuelta J.L."/>
            <person name="Moreno S."/>
            <person name="Armstrong J."/>
            <person name="Forsburg S.L."/>
            <person name="Cerutti L."/>
            <person name="Lowe T."/>
            <person name="McCombie W.R."/>
            <person name="Paulsen I."/>
            <person name="Potashkin J."/>
            <person name="Shpakovski G.V."/>
            <person name="Ussery D."/>
            <person name="Barrell B.G."/>
            <person name="Nurse P."/>
        </authorList>
    </citation>
    <scope>NUCLEOTIDE SEQUENCE [LARGE SCALE GENOMIC DNA]</scope>
    <source>
        <strain>972 / ATCC 24843</strain>
    </source>
</reference>
<reference key="3">
    <citation type="journal article" date="2000" name="Genes Cells">
        <title>Large-scale screening of intracellular protein localization in living fission yeast cells by the use of a GFP-fusion genomic DNA library.</title>
        <authorList>
            <person name="Ding D.-Q."/>
            <person name="Tomita Y."/>
            <person name="Yamamoto A."/>
            <person name="Chikashige Y."/>
            <person name="Haraguchi T."/>
            <person name="Hiraoka Y."/>
        </authorList>
    </citation>
    <scope>NUCLEOTIDE SEQUENCE [LARGE SCALE GENOMIC DNA] OF 81-651</scope>
    <scope>SUBCELLULAR LOCATION</scope>
    <source>
        <strain>ATCC 38364 / 968</strain>
    </source>
</reference>
<reference key="4">
    <citation type="submission" date="1999-09" db="EMBL/GenBank/DDBJ databases">
        <title>S. pombe ufd2 homolog.</title>
        <authorList>
            <person name="Kawamukai M."/>
        </authorList>
    </citation>
    <scope>NUCLEOTIDE SEQUENCE [MRNA] OF 896-1010</scope>
</reference>
<accession>Q9HE05</accession>
<accession>O60009</accession>
<accession>Q9P7A3</accession>
<accession>Q9UTT4</accession>
<accession>Q9UU63</accession>
<sequence length="1010" mass="115276">MSDLEKIRLKRLAKLQQTNSEANSSKEPKESNIAPEPKKPDLKKRFIGSKATTSNSEQKEISPPVTSGAPKHRLFSKDEWMHFITCQALNITLSETDSSKYYLEGFKKDLEEEGSPLLFNENNVDSALLSRLSTTGNNTFSYLLQSWSFLYQYKKRLPKDENQDFKIHYLSLLKSLLVSYAGIVVMLPDTFNSETIDLAEVLIGAEGIPLEFLSEFVQRFEHENLDELFIPVLESLSLKIGLMNVDTVQMNVMQIILQLVSLKPIALLLPKLPSWNPTNNAGEIEYKTFLGRISSLSVFTQDVASRYFSNSTERSAQNISSSISSLKLTMSTYQDVLFQIFNTLIRTSTSLRESVLDFFAMVVNANHKRQSIQVNHFDITSDACMLNFSHVLSRLSEPFLDIGCSKIDRVQVEYFRRNPRVDIKEETKLNADQKASESFYSKPAEGSNNFISDIFFLNLAFHHYGVNATFKALEQLVQSIRDSEKLKERLETEQQNMSGSFQATRLTAQLSRLDQRLDLDRSFVHCYEIMLTQTSDTSRSFSFLNFVAIWLSRLADGQSSTYPKMPLSLPFNENAPEAFKCLPEYFIETITDYMLSLFKTSSSTLTLHSLEPLCEFCVSFLTQANYIKNPYLRAKLAEILYFGVQTHVGRSELLLDVVRTSKVATRWLLPALMAFYIEIESTGQSTQFYDKFNIRFYICEVFRTIWKQPAYFGKLEQEQKTNLPFFVKFVALMLNDATYLLDEALLKLTEIHNLQSLLADAISNSNSNQNVQESQSNLAAAERQASTYCQLGNETIFMLKLFTSSIPKAFCAVEIVDRLAAMLNYNLQALCGPKCSNLKVEDPTKYHFNAKTLLSIIFDVYLNLCNEPAFVEAVAHDGRSYSKEIFERATSIMTKHNLKSSFDIEAIKEFVNRVEAFRLQEATEEEDMGDIPDYFLDPLMFTIMKDPVVLPRSGISIDRSTIKAHLLSDATDPFNRTPLTLDDVTPNDTLREEINTFLKSKRNKHSRNSE</sequence>
<keyword id="KW-0963">Cytoplasm</keyword>
<keyword id="KW-0539">Nucleus</keyword>
<keyword id="KW-1185">Reference proteome</keyword>
<keyword id="KW-0808">Transferase</keyword>
<keyword id="KW-0833">Ubl conjugation pathway</keyword>
<name>UFD2_SCHPO</name>